<feature type="chain" id="PRO_1000198770" description="Indole-3-glycerol phosphate synthase">
    <location>
        <begin position="1"/>
        <end position="262"/>
    </location>
</feature>
<proteinExistence type="inferred from homology"/>
<comment type="catalytic activity">
    <reaction evidence="1">
        <text>1-(2-carboxyphenylamino)-1-deoxy-D-ribulose 5-phosphate + H(+) = (1S,2R)-1-C-(indol-3-yl)glycerol 3-phosphate + CO2 + H2O</text>
        <dbReference type="Rhea" id="RHEA:23476"/>
        <dbReference type="ChEBI" id="CHEBI:15377"/>
        <dbReference type="ChEBI" id="CHEBI:15378"/>
        <dbReference type="ChEBI" id="CHEBI:16526"/>
        <dbReference type="ChEBI" id="CHEBI:58613"/>
        <dbReference type="ChEBI" id="CHEBI:58866"/>
        <dbReference type="EC" id="4.1.1.48"/>
    </reaction>
</comment>
<comment type="pathway">
    <text evidence="1">Amino-acid biosynthesis; L-tryptophan biosynthesis; L-tryptophan from chorismate: step 4/5.</text>
</comment>
<comment type="similarity">
    <text evidence="1">Belongs to the TrpC family.</text>
</comment>
<gene>
    <name evidence="1" type="primary">trpC</name>
    <name type="ordered locus">CCNA_01976</name>
</gene>
<accession>B8GWP9</accession>
<keyword id="KW-0028">Amino-acid biosynthesis</keyword>
<keyword id="KW-0057">Aromatic amino acid biosynthesis</keyword>
<keyword id="KW-0210">Decarboxylase</keyword>
<keyword id="KW-0456">Lyase</keyword>
<keyword id="KW-1185">Reference proteome</keyword>
<keyword id="KW-0822">Tryptophan biosynthesis</keyword>
<evidence type="ECO:0000255" key="1">
    <source>
        <dbReference type="HAMAP-Rule" id="MF_00134"/>
    </source>
</evidence>
<organism>
    <name type="scientific">Caulobacter vibrioides (strain NA1000 / CB15N)</name>
    <name type="common">Caulobacter crescentus</name>
    <dbReference type="NCBI Taxonomy" id="565050"/>
    <lineage>
        <taxon>Bacteria</taxon>
        <taxon>Pseudomonadati</taxon>
        <taxon>Pseudomonadota</taxon>
        <taxon>Alphaproteobacteria</taxon>
        <taxon>Caulobacterales</taxon>
        <taxon>Caulobacteraceae</taxon>
        <taxon>Caulobacter</taxon>
    </lineage>
</organism>
<dbReference type="EC" id="4.1.1.48" evidence="1"/>
<dbReference type="EMBL" id="CP001340">
    <property type="protein sequence ID" value="ACL95441.1"/>
    <property type="molecule type" value="Genomic_DNA"/>
</dbReference>
<dbReference type="RefSeq" id="WP_010919765.1">
    <property type="nucleotide sequence ID" value="NC_011916.1"/>
</dbReference>
<dbReference type="RefSeq" id="YP_002517349.1">
    <property type="nucleotide sequence ID" value="NC_011916.1"/>
</dbReference>
<dbReference type="SMR" id="B8GWP9"/>
<dbReference type="GeneID" id="7330116"/>
<dbReference type="KEGG" id="ccs:CCNA_01976"/>
<dbReference type="PATRIC" id="fig|565050.3.peg.1934"/>
<dbReference type="HOGENOM" id="CLU_034247_2_0_5"/>
<dbReference type="OrthoDB" id="9804217at2"/>
<dbReference type="PhylomeDB" id="B8GWP9"/>
<dbReference type="UniPathway" id="UPA00035">
    <property type="reaction ID" value="UER00043"/>
</dbReference>
<dbReference type="Proteomes" id="UP000001364">
    <property type="component" value="Chromosome"/>
</dbReference>
<dbReference type="GO" id="GO:0004425">
    <property type="term" value="F:indole-3-glycerol-phosphate synthase activity"/>
    <property type="evidence" value="ECO:0007669"/>
    <property type="project" value="UniProtKB-UniRule"/>
</dbReference>
<dbReference type="GO" id="GO:0004640">
    <property type="term" value="F:phosphoribosylanthranilate isomerase activity"/>
    <property type="evidence" value="ECO:0007669"/>
    <property type="project" value="TreeGrafter"/>
</dbReference>
<dbReference type="GO" id="GO:0000162">
    <property type="term" value="P:L-tryptophan biosynthetic process"/>
    <property type="evidence" value="ECO:0007669"/>
    <property type="project" value="UniProtKB-UniRule"/>
</dbReference>
<dbReference type="CDD" id="cd00331">
    <property type="entry name" value="IGPS"/>
    <property type="match status" value="1"/>
</dbReference>
<dbReference type="FunFam" id="3.20.20.70:FF:000024">
    <property type="entry name" value="Indole-3-glycerol phosphate synthase"/>
    <property type="match status" value="1"/>
</dbReference>
<dbReference type="Gene3D" id="3.20.20.70">
    <property type="entry name" value="Aldolase class I"/>
    <property type="match status" value="1"/>
</dbReference>
<dbReference type="HAMAP" id="MF_00134_B">
    <property type="entry name" value="IGPS_B"/>
    <property type="match status" value="1"/>
</dbReference>
<dbReference type="InterPro" id="IPR013785">
    <property type="entry name" value="Aldolase_TIM"/>
</dbReference>
<dbReference type="InterPro" id="IPR045186">
    <property type="entry name" value="Indole-3-glycerol_P_synth"/>
</dbReference>
<dbReference type="InterPro" id="IPR013798">
    <property type="entry name" value="Indole-3-glycerol_P_synth_dom"/>
</dbReference>
<dbReference type="InterPro" id="IPR001468">
    <property type="entry name" value="Indole-3-GlycerolPSynthase_CS"/>
</dbReference>
<dbReference type="InterPro" id="IPR011060">
    <property type="entry name" value="RibuloseP-bd_barrel"/>
</dbReference>
<dbReference type="NCBIfam" id="NF001370">
    <property type="entry name" value="PRK00278.1-2"/>
    <property type="match status" value="1"/>
</dbReference>
<dbReference type="NCBIfam" id="NF001373">
    <property type="entry name" value="PRK00278.1-6"/>
    <property type="match status" value="1"/>
</dbReference>
<dbReference type="NCBIfam" id="NF001377">
    <property type="entry name" value="PRK00278.2-4"/>
    <property type="match status" value="1"/>
</dbReference>
<dbReference type="PANTHER" id="PTHR22854:SF2">
    <property type="entry name" value="INDOLE-3-GLYCEROL-PHOSPHATE SYNTHASE"/>
    <property type="match status" value="1"/>
</dbReference>
<dbReference type="PANTHER" id="PTHR22854">
    <property type="entry name" value="TRYPTOPHAN BIOSYNTHESIS PROTEIN"/>
    <property type="match status" value="1"/>
</dbReference>
<dbReference type="Pfam" id="PF00218">
    <property type="entry name" value="IGPS"/>
    <property type="match status" value="1"/>
</dbReference>
<dbReference type="SUPFAM" id="SSF51366">
    <property type="entry name" value="Ribulose-phoshate binding barrel"/>
    <property type="match status" value="1"/>
</dbReference>
<dbReference type="PROSITE" id="PS00614">
    <property type="entry name" value="IGPS"/>
    <property type="match status" value="1"/>
</dbReference>
<reference key="1">
    <citation type="journal article" date="2010" name="J. Bacteriol.">
        <title>The genetic basis of laboratory adaptation in Caulobacter crescentus.</title>
        <authorList>
            <person name="Marks M.E."/>
            <person name="Castro-Rojas C.M."/>
            <person name="Teiling C."/>
            <person name="Du L."/>
            <person name="Kapatral V."/>
            <person name="Walunas T.L."/>
            <person name="Crosson S."/>
        </authorList>
    </citation>
    <scope>NUCLEOTIDE SEQUENCE [LARGE SCALE GENOMIC DNA]</scope>
    <source>
        <strain>NA1000 / CB15N</strain>
    </source>
</reference>
<sequence>MTDILAKIAAYKREDVAARKAERSQAEIDAAAKAASAPRGFKAALEAHHAPGRLSLIAEIKKASPSKGLIREDFDPPVLAKAYEAGGAACLSVLTDGPSFQGADDYLVTARAAVALPCIRKDFLVDPWQVAESRALGADAILVILAMIDDVLAAELMSEARRLGMDALVEVHDEAEMARAGALGSDLVGINNRDLKSFVVDLAVTERLSAQAPRDALLVTESGIFTHDDVVRMEATGAKAMLVGESLMRHADVTSATRALIA</sequence>
<name>TRPC_CAUVN</name>
<protein>
    <recommendedName>
        <fullName evidence="1">Indole-3-glycerol phosphate synthase</fullName>
        <shortName evidence="1">IGPS</shortName>
        <ecNumber evidence="1">4.1.1.48</ecNumber>
    </recommendedName>
</protein>